<dbReference type="EC" id="2.1.1.-" evidence="1"/>
<dbReference type="EMBL" id="CP001052">
    <property type="protein sequence ID" value="ACD17818.1"/>
    <property type="molecule type" value="Genomic_DNA"/>
</dbReference>
<dbReference type="RefSeq" id="WP_012434381.1">
    <property type="nucleotide sequence ID" value="NC_010681.1"/>
</dbReference>
<dbReference type="SMR" id="B2SYT3"/>
<dbReference type="STRING" id="398527.Bphyt_3428"/>
<dbReference type="KEGG" id="bpy:Bphyt_3428"/>
<dbReference type="eggNOG" id="COG2264">
    <property type="taxonomic scope" value="Bacteria"/>
</dbReference>
<dbReference type="HOGENOM" id="CLU_049382_4_1_4"/>
<dbReference type="OrthoDB" id="9785995at2"/>
<dbReference type="Proteomes" id="UP000001739">
    <property type="component" value="Chromosome 1"/>
</dbReference>
<dbReference type="GO" id="GO:0005829">
    <property type="term" value="C:cytosol"/>
    <property type="evidence" value="ECO:0007669"/>
    <property type="project" value="TreeGrafter"/>
</dbReference>
<dbReference type="GO" id="GO:0016279">
    <property type="term" value="F:protein-lysine N-methyltransferase activity"/>
    <property type="evidence" value="ECO:0007669"/>
    <property type="project" value="TreeGrafter"/>
</dbReference>
<dbReference type="GO" id="GO:0032259">
    <property type="term" value="P:methylation"/>
    <property type="evidence" value="ECO:0007669"/>
    <property type="project" value="UniProtKB-KW"/>
</dbReference>
<dbReference type="CDD" id="cd02440">
    <property type="entry name" value="AdoMet_MTases"/>
    <property type="match status" value="1"/>
</dbReference>
<dbReference type="Gene3D" id="3.40.50.150">
    <property type="entry name" value="Vaccinia Virus protein VP39"/>
    <property type="match status" value="1"/>
</dbReference>
<dbReference type="HAMAP" id="MF_00735">
    <property type="entry name" value="Methyltr_PrmA"/>
    <property type="match status" value="1"/>
</dbReference>
<dbReference type="InterPro" id="IPR050078">
    <property type="entry name" value="Ribosomal_L11_MeTrfase_PrmA"/>
</dbReference>
<dbReference type="InterPro" id="IPR004498">
    <property type="entry name" value="Ribosomal_PrmA_MeTrfase"/>
</dbReference>
<dbReference type="InterPro" id="IPR029063">
    <property type="entry name" value="SAM-dependent_MTases_sf"/>
</dbReference>
<dbReference type="NCBIfam" id="TIGR00406">
    <property type="entry name" value="prmA"/>
    <property type="match status" value="1"/>
</dbReference>
<dbReference type="PANTHER" id="PTHR43648">
    <property type="entry name" value="ELECTRON TRANSFER FLAVOPROTEIN BETA SUBUNIT LYSINE METHYLTRANSFERASE"/>
    <property type="match status" value="1"/>
</dbReference>
<dbReference type="PANTHER" id="PTHR43648:SF1">
    <property type="entry name" value="ELECTRON TRANSFER FLAVOPROTEIN BETA SUBUNIT LYSINE METHYLTRANSFERASE"/>
    <property type="match status" value="1"/>
</dbReference>
<dbReference type="Pfam" id="PF06325">
    <property type="entry name" value="PrmA"/>
    <property type="match status" value="1"/>
</dbReference>
<dbReference type="PIRSF" id="PIRSF000401">
    <property type="entry name" value="RPL11_MTase"/>
    <property type="match status" value="1"/>
</dbReference>
<dbReference type="SUPFAM" id="SSF53335">
    <property type="entry name" value="S-adenosyl-L-methionine-dependent methyltransferases"/>
    <property type="match status" value="1"/>
</dbReference>
<sequence length="300" mass="32910">MSYRELIAELAREHAEEFSDALLELGALSVSVEDADADTPDEQPLFGEPGLTPDRTAWQRSRVIALLAPEHEPAVLLTAAANEIGLPAAPSFTVREVEDQDWVRLTQSQFDPIKIGERIWVVPSWHDAPDPEALVLELDPGLAFGTGSHPTTRLCMEWLEQSVQPEQSVLDYGCGSGILAILAKKCGANPVYGIDIDPQAVESARHNSERNRAEVIYGLPDECPTGEFDIVVANILSNPLKLMASMLTSKVKPGGKIALSGILARQADEVAQVYSRWIDISVWREHEGWVCLSGTRRESH</sequence>
<comment type="function">
    <text evidence="1">Methylates ribosomal protein L11.</text>
</comment>
<comment type="catalytic activity">
    <reaction evidence="1">
        <text>L-lysyl-[protein] + 3 S-adenosyl-L-methionine = N(6),N(6),N(6)-trimethyl-L-lysyl-[protein] + 3 S-adenosyl-L-homocysteine + 3 H(+)</text>
        <dbReference type="Rhea" id="RHEA:54192"/>
        <dbReference type="Rhea" id="RHEA-COMP:9752"/>
        <dbReference type="Rhea" id="RHEA-COMP:13826"/>
        <dbReference type="ChEBI" id="CHEBI:15378"/>
        <dbReference type="ChEBI" id="CHEBI:29969"/>
        <dbReference type="ChEBI" id="CHEBI:57856"/>
        <dbReference type="ChEBI" id="CHEBI:59789"/>
        <dbReference type="ChEBI" id="CHEBI:61961"/>
    </reaction>
</comment>
<comment type="subcellular location">
    <subcellularLocation>
        <location evidence="1">Cytoplasm</location>
    </subcellularLocation>
</comment>
<comment type="similarity">
    <text evidence="1">Belongs to the methyltransferase superfamily. PrmA family.</text>
</comment>
<name>PRMA_PARPJ</name>
<protein>
    <recommendedName>
        <fullName evidence="1">Ribosomal protein L11 methyltransferase</fullName>
        <shortName evidence="1">L11 Mtase</shortName>
        <ecNumber evidence="1">2.1.1.-</ecNumber>
    </recommendedName>
</protein>
<proteinExistence type="inferred from homology"/>
<evidence type="ECO:0000255" key="1">
    <source>
        <dbReference type="HAMAP-Rule" id="MF_00735"/>
    </source>
</evidence>
<feature type="chain" id="PRO_1000192594" description="Ribosomal protein L11 methyltransferase">
    <location>
        <begin position="1"/>
        <end position="300"/>
    </location>
</feature>
<feature type="binding site" evidence="1">
    <location>
        <position position="152"/>
    </location>
    <ligand>
        <name>S-adenosyl-L-methionine</name>
        <dbReference type="ChEBI" id="CHEBI:59789"/>
    </ligand>
</feature>
<feature type="binding site" evidence="1">
    <location>
        <position position="173"/>
    </location>
    <ligand>
        <name>S-adenosyl-L-methionine</name>
        <dbReference type="ChEBI" id="CHEBI:59789"/>
    </ligand>
</feature>
<feature type="binding site" evidence="1">
    <location>
        <position position="195"/>
    </location>
    <ligand>
        <name>S-adenosyl-L-methionine</name>
        <dbReference type="ChEBI" id="CHEBI:59789"/>
    </ligand>
</feature>
<feature type="binding site" evidence="1">
    <location>
        <position position="234"/>
    </location>
    <ligand>
        <name>S-adenosyl-L-methionine</name>
        <dbReference type="ChEBI" id="CHEBI:59789"/>
    </ligand>
</feature>
<accession>B2SYT3</accession>
<gene>
    <name evidence="1" type="primary">prmA</name>
    <name type="ordered locus">Bphyt_3428</name>
</gene>
<keyword id="KW-0963">Cytoplasm</keyword>
<keyword id="KW-0489">Methyltransferase</keyword>
<keyword id="KW-0949">S-adenosyl-L-methionine</keyword>
<keyword id="KW-0808">Transferase</keyword>
<reference key="1">
    <citation type="journal article" date="2011" name="J. Bacteriol.">
        <title>Complete genome sequence of the plant growth-promoting endophyte Burkholderia phytofirmans strain PsJN.</title>
        <authorList>
            <person name="Weilharter A."/>
            <person name="Mitter B."/>
            <person name="Shin M.V."/>
            <person name="Chain P.S."/>
            <person name="Nowak J."/>
            <person name="Sessitsch A."/>
        </authorList>
    </citation>
    <scope>NUCLEOTIDE SEQUENCE [LARGE SCALE GENOMIC DNA]</scope>
    <source>
        <strain>DSM 17436 / LMG 22146 / PsJN</strain>
    </source>
</reference>
<organism>
    <name type="scientific">Paraburkholderia phytofirmans (strain DSM 17436 / LMG 22146 / PsJN)</name>
    <name type="common">Burkholderia phytofirmans</name>
    <dbReference type="NCBI Taxonomy" id="398527"/>
    <lineage>
        <taxon>Bacteria</taxon>
        <taxon>Pseudomonadati</taxon>
        <taxon>Pseudomonadota</taxon>
        <taxon>Betaproteobacteria</taxon>
        <taxon>Burkholderiales</taxon>
        <taxon>Burkholderiaceae</taxon>
        <taxon>Paraburkholderia</taxon>
    </lineage>
</organism>